<feature type="chain" id="PRO_0000325689" description="Uroporphyrinogen decarboxylase">
    <location>
        <begin position="1"/>
        <end position="344"/>
    </location>
</feature>
<feature type="binding site" evidence="1">
    <location>
        <begin position="25"/>
        <end position="29"/>
    </location>
    <ligand>
        <name>substrate</name>
    </ligand>
</feature>
<feature type="binding site" evidence="1">
    <location>
        <position position="75"/>
    </location>
    <ligand>
        <name>substrate</name>
    </ligand>
</feature>
<feature type="binding site" evidence="1">
    <location>
        <position position="152"/>
    </location>
    <ligand>
        <name>substrate</name>
    </ligand>
</feature>
<feature type="binding site" evidence="1">
    <location>
        <position position="207"/>
    </location>
    <ligand>
        <name>substrate</name>
    </ligand>
</feature>
<feature type="binding site" evidence="1">
    <location>
        <position position="323"/>
    </location>
    <ligand>
        <name>substrate</name>
    </ligand>
</feature>
<feature type="site" description="Transition state stabilizer" evidence="1">
    <location>
        <position position="75"/>
    </location>
</feature>
<organism>
    <name type="scientific">Roseobacter denitrificans (strain ATCC 33942 / OCh 114)</name>
    <name type="common">Erythrobacter sp. (strain OCh 114)</name>
    <name type="synonym">Roseobacter denitrificans</name>
    <dbReference type="NCBI Taxonomy" id="375451"/>
    <lineage>
        <taxon>Bacteria</taxon>
        <taxon>Pseudomonadati</taxon>
        <taxon>Pseudomonadota</taxon>
        <taxon>Alphaproteobacteria</taxon>
        <taxon>Rhodobacterales</taxon>
        <taxon>Roseobacteraceae</taxon>
        <taxon>Roseobacter</taxon>
    </lineage>
</organism>
<protein>
    <recommendedName>
        <fullName evidence="1">Uroporphyrinogen decarboxylase</fullName>
        <shortName evidence="1">UPD</shortName>
        <shortName evidence="1">URO-D</shortName>
        <ecNumber evidence="1">4.1.1.37</ecNumber>
    </recommendedName>
</protein>
<proteinExistence type="inferred from homology"/>
<accession>Q16AR3</accession>
<dbReference type="EC" id="4.1.1.37" evidence="1"/>
<dbReference type="EMBL" id="CP000362">
    <property type="protein sequence ID" value="ABG30930.1"/>
    <property type="molecule type" value="Genomic_DNA"/>
</dbReference>
<dbReference type="RefSeq" id="WP_011567550.1">
    <property type="nucleotide sequence ID" value="NC_008209.1"/>
</dbReference>
<dbReference type="SMR" id="Q16AR3"/>
<dbReference type="STRING" id="375451.RD1_1284"/>
<dbReference type="KEGG" id="rde:RD1_1284"/>
<dbReference type="eggNOG" id="COG0407">
    <property type="taxonomic scope" value="Bacteria"/>
</dbReference>
<dbReference type="HOGENOM" id="CLU_040933_0_0_5"/>
<dbReference type="OrthoDB" id="9806656at2"/>
<dbReference type="UniPathway" id="UPA00251">
    <property type="reaction ID" value="UER00321"/>
</dbReference>
<dbReference type="Proteomes" id="UP000007029">
    <property type="component" value="Chromosome"/>
</dbReference>
<dbReference type="GO" id="GO:0005829">
    <property type="term" value="C:cytosol"/>
    <property type="evidence" value="ECO:0007669"/>
    <property type="project" value="TreeGrafter"/>
</dbReference>
<dbReference type="GO" id="GO:0004853">
    <property type="term" value="F:uroporphyrinogen decarboxylase activity"/>
    <property type="evidence" value="ECO:0007669"/>
    <property type="project" value="UniProtKB-UniRule"/>
</dbReference>
<dbReference type="GO" id="GO:0019353">
    <property type="term" value="P:protoporphyrinogen IX biosynthetic process from glutamate"/>
    <property type="evidence" value="ECO:0007669"/>
    <property type="project" value="TreeGrafter"/>
</dbReference>
<dbReference type="CDD" id="cd00717">
    <property type="entry name" value="URO-D"/>
    <property type="match status" value="1"/>
</dbReference>
<dbReference type="Gene3D" id="3.20.20.210">
    <property type="match status" value="1"/>
</dbReference>
<dbReference type="HAMAP" id="MF_00218">
    <property type="entry name" value="URO_D"/>
    <property type="match status" value="1"/>
</dbReference>
<dbReference type="InterPro" id="IPR038071">
    <property type="entry name" value="UROD/MetE-like_sf"/>
</dbReference>
<dbReference type="InterPro" id="IPR006361">
    <property type="entry name" value="Uroporphyrinogen_deCO2ase_HemE"/>
</dbReference>
<dbReference type="InterPro" id="IPR000257">
    <property type="entry name" value="Uroporphyrinogen_deCOase"/>
</dbReference>
<dbReference type="NCBIfam" id="TIGR01464">
    <property type="entry name" value="hemE"/>
    <property type="match status" value="1"/>
</dbReference>
<dbReference type="PANTHER" id="PTHR21091">
    <property type="entry name" value="METHYLTETRAHYDROFOLATE:HOMOCYSTEINE METHYLTRANSFERASE RELATED"/>
    <property type="match status" value="1"/>
</dbReference>
<dbReference type="PANTHER" id="PTHR21091:SF169">
    <property type="entry name" value="UROPORPHYRINOGEN DECARBOXYLASE"/>
    <property type="match status" value="1"/>
</dbReference>
<dbReference type="Pfam" id="PF01208">
    <property type="entry name" value="URO-D"/>
    <property type="match status" value="1"/>
</dbReference>
<dbReference type="SUPFAM" id="SSF51726">
    <property type="entry name" value="UROD/MetE-like"/>
    <property type="match status" value="1"/>
</dbReference>
<dbReference type="PROSITE" id="PS00906">
    <property type="entry name" value="UROD_1"/>
    <property type="match status" value="1"/>
</dbReference>
<dbReference type="PROSITE" id="PS00907">
    <property type="entry name" value="UROD_2"/>
    <property type="match status" value="1"/>
</dbReference>
<keyword id="KW-0963">Cytoplasm</keyword>
<keyword id="KW-0210">Decarboxylase</keyword>
<keyword id="KW-0456">Lyase</keyword>
<keyword id="KW-0627">Porphyrin biosynthesis</keyword>
<keyword id="KW-1185">Reference proteome</keyword>
<name>DCUP_ROSDO</name>
<reference key="1">
    <citation type="journal article" date="2007" name="J. Bacteriol.">
        <title>The complete genome sequence of Roseobacter denitrificans reveals a mixotrophic rather than photosynthetic metabolism.</title>
        <authorList>
            <person name="Swingley W.D."/>
            <person name="Sadekar S."/>
            <person name="Mastrian S.D."/>
            <person name="Matthies H.J."/>
            <person name="Hao J."/>
            <person name="Ramos H."/>
            <person name="Acharya C.R."/>
            <person name="Conrad A.L."/>
            <person name="Taylor H.L."/>
            <person name="Dejesa L.C."/>
            <person name="Shah M.K."/>
            <person name="O'Huallachain M.E."/>
            <person name="Lince M.T."/>
            <person name="Blankenship R.E."/>
            <person name="Beatty J.T."/>
            <person name="Touchman J.W."/>
        </authorList>
    </citation>
    <scope>NUCLEOTIDE SEQUENCE [LARGE SCALE GENOMIC DNA]</scope>
    <source>
        <strain>ATCC 33942 / OCh 114</strain>
    </source>
</reference>
<comment type="function">
    <text evidence="1">Catalyzes the decarboxylation of four acetate groups of uroporphyrinogen-III to yield coproporphyrinogen-III.</text>
</comment>
<comment type="catalytic activity">
    <reaction evidence="1">
        <text>uroporphyrinogen III + 4 H(+) = coproporphyrinogen III + 4 CO2</text>
        <dbReference type="Rhea" id="RHEA:19865"/>
        <dbReference type="ChEBI" id="CHEBI:15378"/>
        <dbReference type="ChEBI" id="CHEBI:16526"/>
        <dbReference type="ChEBI" id="CHEBI:57308"/>
        <dbReference type="ChEBI" id="CHEBI:57309"/>
        <dbReference type="EC" id="4.1.1.37"/>
    </reaction>
</comment>
<comment type="pathway">
    <text evidence="1">Porphyrin-containing compound metabolism; protoporphyrin-IX biosynthesis; coproporphyrinogen-III from 5-aminolevulinate: step 4/4.</text>
</comment>
<comment type="subunit">
    <text evidence="1">Homodimer.</text>
</comment>
<comment type="subcellular location">
    <subcellularLocation>
        <location evidence="1">Cytoplasm</location>
    </subcellularLocation>
</comment>
<comment type="similarity">
    <text evidence="1">Belongs to the uroporphyrinogen decarboxylase family.</text>
</comment>
<evidence type="ECO:0000255" key="1">
    <source>
        <dbReference type="HAMAP-Rule" id="MF_00218"/>
    </source>
</evidence>
<sequence length="344" mass="37203">MAAAKTILRSLAGETLPTPPIWMMRQAGRYLPEYKATRAQAGDFLSLCYNPELAAEVTLQPIRRYGFDAAILFADILLLPQALGADLWFVTGEGPRLSTITTQADFDKLKPVDEIDAVLNPIYETVRILRRELPQETTLIGFAGAPWTVATYMIAGRGTPDQAPAHALKDENRELFEALLARITQGTIEYLSRQIEAGAEVVKIFDSWAGSLKGADFQRYALEPAREITAAIKARHPDIPVIGFPREAGDGYIGFAKATGVDCVALDNSVSAEWAAANVQVDGCVQGNLASSHMVTGGQALIDETRAIVKAFSGGPHIFNLGHGITPDADPDNVQRMIDAVRGQ</sequence>
<gene>
    <name evidence="1" type="primary">hemE</name>
    <name type="ordered locus">RD1_1284</name>
</gene>